<keyword id="KW-0240">DNA-directed RNA polymerase</keyword>
<keyword id="KW-0460">Magnesium</keyword>
<keyword id="KW-0479">Metal-binding</keyword>
<keyword id="KW-0548">Nucleotidyltransferase</keyword>
<keyword id="KW-1185">Reference proteome</keyword>
<keyword id="KW-0804">Transcription</keyword>
<keyword id="KW-0808">Transferase</keyword>
<keyword id="KW-0862">Zinc</keyword>
<dbReference type="EC" id="2.7.7.6" evidence="1"/>
<dbReference type="EMBL" id="AE017226">
    <property type="protein sequence ID" value="AAS12938.1"/>
    <property type="molecule type" value="Genomic_DNA"/>
</dbReference>
<dbReference type="RefSeq" id="NP_973019.1">
    <property type="nucleotide sequence ID" value="NC_002967.9"/>
</dbReference>
<dbReference type="RefSeq" id="WP_002680359.1">
    <property type="nucleotide sequence ID" value="NC_002967.9"/>
</dbReference>
<dbReference type="SMR" id="Q73JJ8"/>
<dbReference type="STRING" id="243275.TDE_2420"/>
<dbReference type="PaxDb" id="243275-TDE_2420"/>
<dbReference type="GeneID" id="2739845"/>
<dbReference type="KEGG" id="tde:TDE_2420"/>
<dbReference type="PATRIC" id="fig|243275.7.peg.2287"/>
<dbReference type="eggNOG" id="COG0086">
    <property type="taxonomic scope" value="Bacteria"/>
</dbReference>
<dbReference type="HOGENOM" id="CLU_000524_3_1_12"/>
<dbReference type="OrthoDB" id="9815296at2"/>
<dbReference type="Proteomes" id="UP000008212">
    <property type="component" value="Chromosome"/>
</dbReference>
<dbReference type="GO" id="GO:0000428">
    <property type="term" value="C:DNA-directed RNA polymerase complex"/>
    <property type="evidence" value="ECO:0007669"/>
    <property type="project" value="UniProtKB-KW"/>
</dbReference>
<dbReference type="GO" id="GO:0003677">
    <property type="term" value="F:DNA binding"/>
    <property type="evidence" value="ECO:0007669"/>
    <property type="project" value="UniProtKB-UniRule"/>
</dbReference>
<dbReference type="GO" id="GO:0003899">
    <property type="term" value="F:DNA-directed RNA polymerase activity"/>
    <property type="evidence" value="ECO:0007669"/>
    <property type="project" value="UniProtKB-UniRule"/>
</dbReference>
<dbReference type="GO" id="GO:0000287">
    <property type="term" value="F:magnesium ion binding"/>
    <property type="evidence" value="ECO:0007669"/>
    <property type="project" value="UniProtKB-UniRule"/>
</dbReference>
<dbReference type="GO" id="GO:0008270">
    <property type="term" value="F:zinc ion binding"/>
    <property type="evidence" value="ECO:0007669"/>
    <property type="project" value="UniProtKB-UniRule"/>
</dbReference>
<dbReference type="GO" id="GO:0006351">
    <property type="term" value="P:DNA-templated transcription"/>
    <property type="evidence" value="ECO:0007669"/>
    <property type="project" value="UniProtKB-UniRule"/>
</dbReference>
<dbReference type="CDD" id="cd02655">
    <property type="entry name" value="RNAP_beta'_C"/>
    <property type="match status" value="1"/>
</dbReference>
<dbReference type="CDD" id="cd01609">
    <property type="entry name" value="RNAP_beta'_N"/>
    <property type="match status" value="1"/>
</dbReference>
<dbReference type="FunFam" id="1.10.150.390:FF:000002">
    <property type="entry name" value="DNA-directed RNA polymerase subunit beta"/>
    <property type="match status" value="1"/>
</dbReference>
<dbReference type="Gene3D" id="1.10.132.30">
    <property type="match status" value="1"/>
</dbReference>
<dbReference type="Gene3D" id="1.10.150.390">
    <property type="match status" value="1"/>
</dbReference>
<dbReference type="Gene3D" id="1.10.1790.20">
    <property type="match status" value="1"/>
</dbReference>
<dbReference type="Gene3D" id="1.10.40.90">
    <property type="match status" value="1"/>
</dbReference>
<dbReference type="Gene3D" id="2.40.40.20">
    <property type="match status" value="1"/>
</dbReference>
<dbReference type="Gene3D" id="2.40.50.100">
    <property type="match status" value="2"/>
</dbReference>
<dbReference type="Gene3D" id="4.10.860.120">
    <property type="entry name" value="RNA polymerase II, clamp domain"/>
    <property type="match status" value="1"/>
</dbReference>
<dbReference type="Gene3D" id="1.10.274.100">
    <property type="entry name" value="RNA polymerase Rpb1, domain 3"/>
    <property type="match status" value="2"/>
</dbReference>
<dbReference type="HAMAP" id="MF_01322">
    <property type="entry name" value="RNApol_bact_RpoC"/>
    <property type="match status" value="1"/>
</dbReference>
<dbReference type="InterPro" id="IPR045867">
    <property type="entry name" value="DNA-dir_RpoC_beta_prime"/>
</dbReference>
<dbReference type="InterPro" id="IPR012754">
    <property type="entry name" value="DNA-dir_RpoC_beta_prime_bact"/>
</dbReference>
<dbReference type="InterPro" id="IPR000722">
    <property type="entry name" value="RNA_pol_asu"/>
</dbReference>
<dbReference type="InterPro" id="IPR006592">
    <property type="entry name" value="RNA_pol_N"/>
</dbReference>
<dbReference type="InterPro" id="IPR007080">
    <property type="entry name" value="RNA_pol_Rpb1_1"/>
</dbReference>
<dbReference type="InterPro" id="IPR007066">
    <property type="entry name" value="RNA_pol_Rpb1_3"/>
</dbReference>
<dbReference type="InterPro" id="IPR042102">
    <property type="entry name" value="RNA_pol_Rpb1_3_sf"/>
</dbReference>
<dbReference type="InterPro" id="IPR007083">
    <property type="entry name" value="RNA_pol_Rpb1_4"/>
</dbReference>
<dbReference type="InterPro" id="IPR007081">
    <property type="entry name" value="RNA_pol_Rpb1_5"/>
</dbReference>
<dbReference type="InterPro" id="IPR044893">
    <property type="entry name" value="RNA_pol_Rpb1_clamp_domain"/>
</dbReference>
<dbReference type="InterPro" id="IPR038120">
    <property type="entry name" value="Rpb1_funnel_sf"/>
</dbReference>
<dbReference type="NCBIfam" id="TIGR02386">
    <property type="entry name" value="rpoC_TIGR"/>
    <property type="match status" value="1"/>
</dbReference>
<dbReference type="PANTHER" id="PTHR19376">
    <property type="entry name" value="DNA-DIRECTED RNA POLYMERASE"/>
    <property type="match status" value="1"/>
</dbReference>
<dbReference type="PANTHER" id="PTHR19376:SF54">
    <property type="entry name" value="DNA-DIRECTED RNA POLYMERASE SUBUNIT BETA"/>
    <property type="match status" value="1"/>
</dbReference>
<dbReference type="Pfam" id="PF04997">
    <property type="entry name" value="RNA_pol_Rpb1_1"/>
    <property type="match status" value="1"/>
</dbReference>
<dbReference type="Pfam" id="PF00623">
    <property type="entry name" value="RNA_pol_Rpb1_2"/>
    <property type="match status" value="2"/>
</dbReference>
<dbReference type="Pfam" id="PF04983">
    <property type="entry name" value="RNA_pol_Rpb1_3"/>
    <property type="match status" value="1"/>
</dbReference>
<dbReference type="Pfam" id="PF05000">
    <property type="entry name" value="RNA_pol_Rpb1_4"/>
    <property type="match status" value="1"/>
</dbReference>
<dbReference type="Pfam" id="PF04998">
    <property type="entry name" value="RNA_pol_Rpb1_5"/>
    <property type="match status" value="1"/>
</dbReference>
<dbReference type="SMART" id="SM00663">
    <property type="entry name" value="RPOLA_N"/>
    <property type="match status" value="1"/>
</dbReference>
<dbReference type="SUPFAM" id="SSF64484">
    <property type="entry name" value="beta and beta-prime subunits of DNA dependent RNA-polymerase"/>
    <property type="match status" value="1"/>
</dbReference>
<accession>Q73JJ8</accession>
<name>RPOC_TREDE</name>
<comment type="function">
    <text evidence="1">DNA-dependent RNA polymerase catalyzes the transcription of DNA into RNA using the four ribonucleoside triphosphates as substrates.</text>
</comment>
<comment type="catalytic activity">
    <reaction evidence="1">
        <text>RNA(n) + a ribonucleoside 5'-triphosphate = RNA(n+1) + diphosphate</text>
        <dbReference type="Rhea" id="RHEA:21248"/>
        <dbReference type="Rhea" id="RHEA-COMP:14527"/>
        <dbReference type="Rhea" id="RHEA-COMP:17342"/>
        <dbReference type="ChEBI" id="CHEBI:33019"/>
        <dbReference type="ChEBI" id="CHEBI:61557"/>
        <dbReference type="ChEBI" id="CHEBI:140395"/>
        <dbReference type="EC" id="2.7.7.6"/>
    </reaction>
</comment>
<comment type="cofactor">
    <cofactor evidence="1">
        <name>Mg(2+)</name>
        <dbReference type="ChEBI" id="CHEBI:18420"/>
    </cofactor>
    <text evidence="1">Binds 1 Mg(2+) ion per subunit.</text>
</comment>
<comment type="cofactor">
    <cofactor evidence="1">
        <name>Zn(2+)</name>
        <dbReference type="ChEBI" id="CHEBI:29105"/>
    </cofactor>
    <text evidence="1">Binds 2 Zn(2+) ions per subunit.</text>
</comment>
<comment type="subunit">
    <text evidence="1">The RNAP catalytic core consists of 2 alpha, 1 beta, 1 beta' and 1 omega subunit. When a sigma factor is associated with the core the holoenzyme is formed, which can initiate transcription.</text>
</comment>
<comment type="similarity">
    <text evidence="1">Belongs to the RNA polymerase beta' chain family.</text>
</comment>
<evidence type="ECO:0000255" key="1">
    <source>
        <dbReference type="HAMAP-Rule" id="MF_01322"/>
    </source>
</evidence>
<sequence length="1424" mass="160037">MRDIQDFDSLMIRLASPDTIRAWSYGEVKKPETINYRTLRPERDGLFCERIFGTTKEWECFCGKFKSIRYKGVICDRCGVEVTHFKVRRERMGHIELAAPVSHIWYYRSVPSRMGLLLNLQVAALRSVLYYEKYIVIDANDTDLEPMQLLTEDEYRDAHERYGAAFTAGMGAGAIKTLLQNINLDELAAQLRAKMIEKGAKSDQRLLRRIEIVENFRASGNKPEWMILDVIPVIPPDLRPMVQLDGGRFATSDLNDLYRRVIHRNSRLSKLMELKAPDIIIRNEKRMLQEAVDALFDNSKRKKAIKGASNRPLKSISDLLKGKQGRFRQNLLGKRVDYSGRSVIVVGPELKLWQCGLPTKMALELFKPFIMKKLVQKEVVSNIKKAKLLVEQEAAEVFAVLDEVVSEHPVLLNRAPTLHRLGIQAFEPVLVEGKAIRLHPLVCKAFNADFDGDQMAIHVPLTQAAQMECWTLMLSARNLLDPANGKTIVFPTQDMVLGLYYLTKERALPEGKKERLYSSVPEVLMAAECHAVGWQEPVLIDYETEPGKIETVRTTPGRILFNEEMPEGVPFTNYALNDKKIRKLIENVFKDKGPWLAVQLLDKLKAVGYKYATYFGATLSMEDMIIPPEKAGMLEKANKEVLEIYNQYKGGHITQEERYNRVVDVWQKTNSNLKEILMKRLQEDKGGFNTIHMMETSGARGSKDQINQLAGMRGLMSKPTGDIIELPIRSNFKEGLNVMEFFISTNGARKGLTDTALKTSDAGYLTRRLVDIAQNVVVNEEDCGTINGIEYAAIKRGDEIRESLSERIAGKYTLERVIHPITGELLIDVNEYITDETAKKIEEAGVETVKLRTVLTCESKHGVCVKCYGRDLARNRIVRIGEAVGIIAAQSIGQPGTQLTMRTFHEGGTASKNVEENRIVFNDYSIIVRGIKGSYVTLKNGHFLFTRKGEFTFSRVLNEYALKKGETALVSTGTRVVKGNPLYTLKNGKEVLSENIAIAEVRDNIIYLTGQEQTIEIRNGSEVVVKENDVIKAGETVGTFDPFADPILAEYDGFVRFEDILPGTTLKEEADEETGVVEKRISDAHFDKMQPRIFISDESGNTVGEDSYFLPGGAQLLVEEGQEIKAGAILAKIAKESVKTKDITGGLPRVSELLEARRPKSPAVLAAIAGVVTIKKGLLKGKRTIMVRDEYGHDVKHLVPIGKRMLVRDGDTVKAGEPLCDGSFDPHDILNILGENALQNYLMKEIKEVYDAQGVTINDKHVGIIVRQMLRKVKIVSVGDTKFIFDQQIDKYRFHEENKRVKEEGGQPAVARPMFQGITKAALNIDSFISAASFQETTKVLTNAAIAGSSDELRGLKENVIIGHLIPAGTGMKQYRDIKLFDKNKSDLDIQMNEILERRRLEAEAAQALEEKELIEEENFLDDL</sequence>
<reference key="1">
    <citation type="journal article" date="2004" name="Proc. Natl. Acad. Sci. U.S.A.">
        <title>Comparison of the genome of the oral pathogen Treponema denticola with other spirochete genomes.</title>
        <authorList>
            <person name="Seshadri R."/>
            <person name="Myers G.S.A."/>
            <person name="Tettelin H."/>
            <person name="Eisen J.A."/>
            <person name="Heidelberg J.F."/>
            <person name="Dodson R.J."/>
            <person name="Davidsen T.M."/>
            <person name="DeBoy R.T."/>
            <person name="Fouts D.E."/>
            <person name="Haft D.H."/>
            <person name="Selengut J."/>
            <person name="Ren Q."/>
            <person name="Brinkac L.M."/>
            <person name="Madupu R."/>
            <person name="Kolonay J.F."/>
            <person name="Durkin S.A."/>
            <person name="Daugherty S.C."/>
            <person name="Shetty J."/>
            <person name="Shvartsbeyn A."/>
            <person name="Gebregeorgis E."/>
            <person name="Geer K."/>
            <person name="Tsegaye G."/>
            <person name="Malek J.A."/>
            <person name="Ayodeji B."/>
            <person name="Shatsman S."/>
            <person name="McLeod M.P."/>
            <person name="Smajs D."/>
            <person name="Howell J.K."/>
            <person name="Pal S."/>
            <person name="Amin A."/>
            <person name="Vashisth P."/>
            <person name="McNeill T.Z."/>
            <person name="Xiang Q."/>
            <person name="Sodergren E."/>
            <person name="Baca E."/>
            <person name="Weinstock G.M."/>
            <person name="Norris S.J."/>
            <person name="Fraser C.M."/>
            <person name="Paulsen I.T."/>
        </authorList>
    </citation>
    <scope>NUCLEOTIDE SEQUENCE [LARGE SCALE GENOMIC DNA]</scope>
    <source>
        <strain>ATCC 35405 / DSM 14222 / CIP 103919 / JCM 8153 / KCTC 15104</strain>
    </source>
</reference>
<proteinExistence type="inferred from homology"/>
<organism>
    <name type="scientific">Treponema denticola (strain ATCC 35405 / DSM 14222 / CIP 103919 / JCM 8153 / KCTC 15104)</name>
    <dbReference type="NCBI Taxonomy" id="243275"/>
    <lineage>
        <taxon>Bacteria</taxon>
        <taxon>Pseudomonadati</taxon>
        <taxon>Spirochaetota</taxon>
        <taxon>Spirochaetia</taxon>
        <taxon>Spirochaetales</taxon>
        <taxon>Treponemataceae</taxon>
        <taxon>Treponema</taxon>
    </lineage>
</organism>
<feature type="chain" id="PRO_0000067822" description="DNA-directed RNA polymerase subunit beta'">
    <location>
        <begin position="1"/>
        <end position="1424"/>
    </location>
</feature>
<feature type="binding site" evidence="1">
    <location>
        <position position="60"/>
    </location>
    <ligand>
        <name>Zn(2+)</name>
        <dbReference type="ChEBI" id="CHEBI:29105"/>
        <label>1</label>
    </ligand>
</feature>
<feature type="binding site" evidence="1">
    <location>
        <position position="62"/>
    </location>
    <ligand>
        <name>Zn(2+)</name>
        <dbReference type="ChEBI" id="CHEBI:29105"/>
        <label>1</label>
    </ligand>
</feature>
<feature type="binding site" evidence="1">
    <location>
        <position position="75"/>
    </location>
    <ligand>
        <name>Zn(2+)</name>
        <dbReference type="ChEBI" id="CHEBI:29105"/>
        <label>1</label>
    </ligand>
</feature>
<feature type="binding site" evidence="1">
    <location>
        <position position="78"/>
    </location>
    <ligand>
        <name>Zn(2+)</name>
        <dbReference type="ChEBI" id="CHEBI:29105"/>
        <label>1</label>
    </ligand>
</feature>
<feature type="binding site" evidence="1">
    <location>
        <position position="449"/>
    </location>
    <ligand>
        <name>Mg(2+)</name>
        <dbReference type="ChEBI" id="CHEBI:18420"/>
    </ligand>
</feature>
<feature type="binding site" evidence="1">
    <location>
        <position position="451"/>
    </location>
    <ligand>
        <name>Mg(2+)</name>
        <dbReference type="ChEBI" id="CHEBI:18420"/>
    </ligand>
</feature>
<feature type="binding site" evidence="1">
    <location>
        <position position="453"/>
    </location>
    <ligand>
        <name>Mg(2+)</name>
        <dbReference type="ChEBI" id="CHEBI:18420"/>
    </ligand>
</feature>
<feature type="binding site" evidence="1">
    <location>
        <position position="783"/>
    </location>
    <ligand>
        <name>Zn(2+)</name>
        <dbReference type="ChEBI" id="CHEBI:29105"/>
        <label>2</label>
    </ligand>
</feature>
<feature type="binding site" evidence="1">
    <location>
        <position position="857"/>
    </location>
    <ligand>
        <name>Zn(2+)</name>
        <dbReference type="ChEBI" id="CHEBI:29105"/>
        <label>2</label>
    </ligand>
</feature>
<feature type="binding site" evidence="1">
    <location>
        <position position="864"/>
    </location>
    <ligand>
        <name>Zn(2+)</name>
        <dbReference type="ChEBI" id="CHEBI:29105"/>
        <label>2</label>
    </ligand>
</feature>
<feature type="binding site" evidence="1">
    <location>
        <position position="867"/>
    </location>
    <ligand>
        <name>Zn(2+)</name>
        <dbReference type="ChEBI" id="CHEBI:29105"/>
        <label>2</label>
    </ligand>
</feature>
<gene>
    <name evidence="1" type="primary">rpoC</name>
    <name type="ordered locus">TDE_2420</name>
</gene>
<protein>
    <recommendedName>
        <fullName evidence="1">DNA-directed RNA polymerase subunit beta'</fullName>
        <shortName evidence="1">RNAP subunit beta'</shortName>
        <ecNumber evidence="1">2.7.7.6</ecNumber>
    </recommendedName>
    <alternativeName>
        <fullName evidence="1">RNA polymerase subunit beta'</fullName>
    </alternativeName>
    <alternativeName>
        <fullName evidence="1">Transcriptase subunit beta'</fullName>
    </alternativeName>
</protein>